<sequence length="626" mass="68982">MVAPWRVSVRVCLSHLRCFELRQGLSLLRPSECPRDARLCWLLLGTLPKVVSLCGDVGEGAPDVLSRRRVRCSGAAGAGPAESLPRAGPLGGVFLHLRLWLRAGALLVKFFPLLLLYPLTYLAPSVSTLWLHLLLKATETSGPTYIKLGQWASTRRDLFSEAFCAQFSKLHVRVTPHPWTHTERFLRQAFGDDWGSILSFENREPVGSGCVAQVYKAYANTAFLETDSVQRLGRASCLPPFSHTGAVGGLRELFGYLGNGRKPPENLADQSFLERLLLPKADLVGSNAGVSRAQVPGHQPEATNLISVAVKVLHPGLLAQVHMDLLLMKIGSRVLGVLPGIKWLSLPEIVEEFEKLMVQQIDLRYEAQNLEHFQVNFRNVKAVKFPTPLRPFVTREVLVETYEESVPVSSYQQAGIPVDLKRKIARLGINMLLKMIFVDNFVHADLHPGNILVQGANGLSSSQEAQLQQADICDTLVVAVPSSLCPLRLVLLDAGIVAELQAPDLRNFRAVFMAVVMGQGQRVAELILHHARASECRDVEGFKTEMAMLVTQARKNTITLEKLHVSSLLSSVFKLLMTHKVKLESNFASIVFAIMVLEGLGRSLDPKLDILEAARPFLLTGPVCPP</sequence>
<feature type="chain" id="PRO_0000271792" description="Uncharacterized aarF domain-containing protein kinase 2">
    <location>
        <begin position="1"/>
        <end position="626"/>
    </location>
</feature>
<feature type="transmembrane region" description="Helical" evidence="2">
    <location>
        <begin position="103"/>
        <end position="123"/>
    </location>
</feature>
<feature type="domain" description="Protein kinase">
    <location>
        <begin position="200"/>
        <end position="618"/>
    </location>
</feature>
<feature type="active site" description="Proton acceptor" evidence="1">
    <location>
        <position position="445"/>
    </location>
</feature>
<feature type="binding site" evidence="1">
    <location>
        <begin position="206"/>
        <end position="214"/>
    </location>
    <ligand>
        <name>ATP</name>
        <dbReference type="ChEBI" id="CHEBI:30616"/>
    </ligand>
</feature>
<feature type="binding site" evidence="1">
    <location>
        <position position="311"/>
    </location>
    <ligand>
        <name>ATP</name>
        <dbReference type="ChEBI" id="CHEBI:30616"/>
    </ligand>
</feature>
<feature type="sequence variant" id="VAR_060990" description="In dbSNP:rs2968558.">
    <original>S</original>
    <variation>G</variation>
    <location>
        <position position="66"/>
    </location>
</feature>
<feature type="sequence variant" id="VAR_029992" description="In dbSNP:rs1140034." evidence="3">
    <original>S</original>
    <variation>P</variation>
    <location>
        <position position="307"/>
    </location>
</feature>
<feature type="sequence variant" id="VAR_088468" description="Found in a patient with slow and progressive proximal muscle weakness with permanent myalgia both at rest and during muscular exertion which results in permanent disability; uncertain significance; decreased levels of coenzyme Q10." evidence="4">
    <location>
        <begin position="333"/>
        <end position="626"/>
    </location>
</feature>
<feature type="sequence variant" id="VAR_041418" description="In dbSNP:rs3748092." evidence="3">
    <original>V</original>
    <variation>L</variation>
    <location>
        <position position="418"/>
    </location>
</feature>
<feature type="sequence variant" id="VAR_029993" description="In dbSNP:rs3748092.">
    <original>V</original>
    <variation>M</variation>
    <location>
        <position position="418"/>
    </location>
</feature>
<feature type="sequence variant" id="VAR_029994" description="In dbSNP:rs1046515." evidence="3">
    <original>P</original>
    <variation>L</variation>
    <location>
        <position position="622"/>
    </location>
</feature>
<feature type="sequence variant" id="VAR_041419" description="In dbSNP:rs55922126." evidence="3">
    <original>P</original>
    <variation>L</variation>
    <location>
        <position position="626"/>
    </location>
</feature>
<organism>
    <name type="scientific">Homo sapiens</name>
    <name type="common">Human</name>
    <dbReference type="NCBI Taxonomy" id="9606"/>
    <lineage>
        <taxon>Eukaryota</taxon>
        <taxon>Metazoa</taxon>
        <taxon>Chordata</taxon>
        <taxon>Craniata</taxon>
        <taxon>Vertebrata</taxon>
        <taxon>Euteleostomi</taxon>
        <taxon>Mammalia</taxon>
        <taxon>Eutheria</taxon>
        <taxon>Euarchontoglires</taxon>
        <taxon>Primates</taxon>
        <taxon>Haplorrhini</taxon>
        <taxon>Catarrhini</taxon>
        <taxon>Hominidae</taxon>
        <taxon>Homo</taxon>
    </lineage>
</organism>
<gene>
    <name type="primary">ADCK2</name>
    <name type="synonym">AARF</name>
</gene>
<dbReference type="EC" id="2.7.11.-"/>
<dbReference type="EMBL" id="AY302592">
    <property type="protein sequence ID" value="AAP60021.1"/>
    <property type="molecule type" value="mRNA"/>
</dbReference>
<dbReference type="EMBL" id="AC006344">
    <property type="protein sequence ID" value="AAD43192.1"/>
    <property type="molecule type" value="Genomic_DNA"/>
</dbReference>
<dbReference type="EMBL" id="AC006452">
    <property type="status" value="NOT_ANNOTATED_CDS"/>
    <property type="molecule type" value="Genomic_DNA"/>
</dbReference>
<dbReference type="EMBL" id="BC014107">
    <property type="protein sequence ID" value="AAH14107.1"/>
    <property type="status" value="ALT_SEQ"/>
    <property type="molecule type" value="mRNA"/>
</dbReference>
<dbReference type="CCDS" id="CCDS5861.1"/>
<dbReference type="RefSeq" id="NP_443085.2">
    <property type="nucleotide sequence ID" value="NM_052853.3"/>
</dbReference>
<dbReference type="BioGRID" id="124782">
    <property type="interactions" value="82"/>
</dbReference>
<dbReference type="FunCoup" id="Q7Z695">
    <property type="interactions" value="501"/>
</dbReference>
<dbReference type="IntAct" id="Q7Z695">
    <property type="interactions" value="71"/>
</dbReference>
<dbReference type="MINT" id="Q7Z695"/>
<dbReference type="STRING" id="9606.ENSP00000072869"/>
<dbReference type="iPTMnet" id="Q7Z695"/>
<dbReference type="PhosphoSitePlus" id="Q7Z695"/>
<dbReference type="SwissPalm" id="Q7Z695"/>
<dbReference type="BioMuta" id="ADCK2"/>
<dbReference type="DMDM" id="74723374"/>
<dbReference type="jPOST" id="Q7Z695"/>
<dbReference type="MassIVE" id="Q7Z695"/>
<dbReference type="PaxDb" id="9606-ENSP00000072869"/>
<dbReference type="PeptideAtlas" id="Q7Z695"/>
<dbReference type="ProteomicsDB" id="69383"/>
<dbReference type="Antibodypedia" id="32457">
    <property type="antibodies" value="167 antibodies from 25 providers"/>
</dbReference>
<dbReference type="DNASU" id="90956"/>
<dbReference type="Ensembl" id="ENST00000072869.9">
    <property type="protein sequence ID" value="ENSP00000072869.4"/>
    <property type="gene ID" value="ENSG00000133597.11"/>
</dbReference>
<dbReference type="GeneID" id="90956"/>
<dbReference type="KEGG" id="hsa:90956"/>
<dbReference type="MANE-Select" id="ENST00000072869.9">
    <property type="protein sequence ID" value="ENSP00000072869.4"/>
    <property type="RefSeq nucleotide sequence ID" value="NM_052853.4"/>
    <property type="RefSeq protein sequence ID" value="NP_443085.2"/>
</dbReference>
<dbReference type="UCSC" id="uc003vvy.2">
    <property type="organism name" value="human"/>
</dbReference>
<dbReference type="AGR" id="HGNC:19039"/>
<dbReference type="CTD" id="90956"/>
<dbReference type="DisGeNET" id="90956"/>
<dbReference type="GeneCards" id="ADCK2"/>
<dbReference type="HGNC" id="HGNC:19039">
    <property type="gene designation" value="ADCK2"/>
</dbReference>
<dbReference type="HPA" id="ENSG00000133597">
    <property type="expression patterns" value="Low tissue specificity"/>
</dbReference>
<dbReference type="neXtProt" id="NX_Q7Z695"/>
<dbReference type="OpenTargets" id="ENSG00000133597"/>
<dbReference type="PharmGKB" id="PA134902329"/>
<dbReference type="VEuPathDB" id="HostDB:ENSG00000133597"/>
<dbReference type="eggNOG" id="KOG1236">
    <property type="taxonomic scope" value="Eukaryota"/>
</dbReference>
<dbReference type="GeneTree" id="ENSGT00390000001536"/>
<dbReference type="HOGENOM" id="CLU_006533_6_1_1"/>
<dbReference type="InParanoid" id="Q7Z695"/>
<dbReference type="OMA" id="SMVRTHH"/>
<dbReference type="OrthoDB" id="427480at2759"/>
<dbReference type="PAN-GO" id="Q7Z695">
    <property type="GO annotations" value="0 GO annotations based on evolutionary models"/>
</dbReference>
<dbReference type="PhylomeDB" id="Q7Z695"/>
<dbReference type="TreeFam" id="TF315018"/>
<dbReference type="PathwayCommons" id="Q7Z695"/>
<dbReference type="SignaLink" id="Q7Z695"/>
<dbReference type="BioGRID-ORCS" id="90956">
    <property type="hits" value="31 hits in 1189 CRISPR screens"/>
</dbReference>
<dbReference type="ChiTaRS" id="ADCK2">
    <property type="organism name" value="human"/>
</dbReference>
<dbReference type="GenomeRNAi" id="90956"/>
<dbReference type="Pharos" id="Q7Z695">
    <property type="development level" value="Tbio"/>
</dbReference>
<dbReference type="PRO" id="PR:Q7Z695"/>
<dbReference type="Proteomes" id="UP000005640">
    <property type="component" value="Chromosome 7"/>
</dbReference>
<dbReference type="RNAct" id="Q7Z695">
    <property type="molecule type" value="protein"/>
</dbReference>
<dbReference type="Bgee" id="ENSG00000133597">
    <property type="expression patterns" value="Expressed in buccal mucosa cell and 207 other cell types or tissues"/>
</dbReference>
<dbReference type="ExpressionAtlas" id="Q7Z695">
    <property type="expression patterns" value="baseline and differential"/>
</dbReference>
<dbReference type="GO" id="GO:0016020">
    <property type="term" value="C:membrane"/>
    <property type="evidence" value="ECO:0007669"/>
    <property type="project" value="UniProtKB-SubCell"/>
</dbReference>
<dbReference type="GO" id="GO:0005739">
    <property type="term" value="C:mitochondrion"/>
    <property type="evidence" value="ECO:0000314"/>
    <property type="project" value="UniProtKB"/>
</dbReference>
<dbReference type="GO" id="GO:0005524">
    <property type="term" value="F:ATP binding"/>
    <property type="evidence" value="ECO:0007669"/>
    <property type="project" value="UniProtKB-KW"/>
</dbReference>
<dbReference type="GO" id="GO:0004674">
    <property type="term" value="F:protein serine/threonine kinase activity"/>
    <property type="evidence" value="ECO:0007669"/>
    <property type="project" value="UniProtKB-KW"/>
</dbReference>
<dbReference type="GO" id="GO:0010795">
    <property type="term" value="P:regulation of ubiquinone biosynthetic process"/>
    <property type="evidence" value="ECO:0000314"/>
    <property type="project" value="UniProtKB"/>
</dbReference>
<dbReference type="CDD" id="cd13971">
    <property type="entry name" value="ADCK2-like"/>
    <property type="match status" value="1"/>
</dbReference>
<dbReference type="InterPro" id="IPR004147">
    <property type="entry name" value="ABC1_dom"/>
</dbReference>
<dbReference type="InterPro" id="IPR044095">
    <property type="entry name" value="ADCK2_dom"/>
</dbReference>
<dbReference type="InterPro" id="IPR052402">
    <property type="entry name" value="ADCK_kinase"/>
</dbReference>
<dbReference type="InterPro" id="IPR011009">
    <property type="entry name" value="Kinase-like_dom_sf"/>
</dbReference>
<dbReference type="PANTHER" id="PTHR45890:SF1">
    <property type="entry name" value="AARF DOMAIN CONTAINING KINASE 2"/>
    <property type="match status" value="1"/>
</dbReference>
<dbReference type="PANTHER" id="PTHR45890">
    <property type="entry name" value="AARF DOMAIN CONTAINING KINASE 2 (PREDICTED)"/>
    <property type="match status" value="1"/>
</dbReference>
<dbReference type="Pfam" id="PF03109">
    <property type="entry name" value="ABC1"/>
    <property type="match status" value="2"/>
</dbReference>
<dbReference type="SUPFAM" id="SSF56112">
    <property type="entry name" value="Protein kinase-like (PK-like)"/>
    <property type="match status" value="1"/>
</dbReference>
<name>ADCK2_HUMAN</name>
<protein>
    <recommendedName>
        <fullName>Uncharacterized aarF domain-containing protein kinase 2</fullName>
        <ecNumber>2.7.11.-</ecNumber>
    </recommendedName>
</protein>
<proteinExistence type="evidence at protein level"/>
<keyword id="KW-0067">ATP-binding</keyword>
<keyword id="KW-0418">Kinase</keyword>
<keyword id="KW-0472">Membrane</keyword>
<keyword id="KW-0496">Mitochondrion</keyword>
<keyword id="KW-0547">Nucleotide-binding</keyword>
<keyword id="KW-1267">Proteomics identification</keyword>
<keyword id="KW-1185">Reference proteome</keyword>
<keyword id="KW-0723">Serine/threonine-protein kinase</keyword>
<keyword id="KW-0808">Transferase</keyword>
<keyword id="KW-0812">Transmembrane</keyword>
<keyword id="KW-1133">Transmembrane helix</keyword>
<comment type="function">
    <text evidence="4 6">The function of this protein is not yet clear. It is not known if it has protein kinase activity and what type of substrate it would phosphorylate (Ser, Thr or Tyr) (Probable). Involved in the mitochondrial import of CoQ precursors, plays a role in muscle mitochondrial function and fatty acid beta-oxidation (PubMed:31480808).</text>
</comment>
<comment type="interaction">
    <interactant intactId="EBI-21505425">
        <id>Q7Z695</id>
    </interactant>
    <interactant intactId="EBI-355133">
        <id>P05141</id>
        <label>SLC25A5</label>
    </interactant>
    <organismsDiffer>false</organismsDiffer>
    <experiments>4</experiments>
</comment>
<comment type="subcellular location">
    <subcellularLocation>
        <location evidence="5">Mitochondrion</location>
    </subcellularLocation>
    <subcellularLocation>
        <location evidence="2">Membrane</location>
        <topology evidence="2">Single-pass membrane protein</topology>
    </subcellularLocation>
</comment>
<comment type="similarity">
    <text evidence="6">Belongs to the protein kinase superfamily. ADCK protein kinase family.</text>
</comment>
<comment type="sequence caution" evidence="6">
    <conflict type="miscellaneous discrepancy">
        <sequence resource="EMBL-CDS" id="AAH14107"/>
    </conflict>
    <text>Aberrant splicing.</text>
</comment>
<evidence type="ECO:0000250" key="1"/>
<evidence type="ECO:0000255" key="2"/>
<evidence type="ECO:0000269" key="3">
    <source>
    </source>
</evidence>
<evidence type="ECO:0000269" key="4">
    <source>
    </source>
</evidence>
<evidence type="ECO:0000269" key="5">
    <source>
    </source>
</evidence>
<evidence type="ECO:0000305" key="6"/>
<accession>Q7Z695</accession>
<accession>Q96CN6</accession>
<accession>Q9Y6T5</accession>
<reference key="1">
    <citation type="submission" date="2003-05" db="EMBL/GenBank/DDBJ databases">
        <authorList>
            <person name="Huang C.Q."/>
            <person name="Shan Y.X."/>
            <person name="Cheng Z."/>
        </authorList>
    </citation>
    <scope>NUCLEOTIDE SEQUENCE [MRNA]</scope>
</reference>
<reference key="2">
    <citation type="journal article" date="2003" name="Nature">
        <title>The DNA sequence of human chromosome 7.</title>
        <authorList>
            <person name="Hillier L.W."/>
            <person name="Fulton R.S."/>
            <person name="Fulton L.A."/>
            <person name="Graves T.A."/>
            <person name="Pepin K.H."/>
            <person name="Wagner-McPherson C."/>
            <person name="Layman D."/>
            <person name="Maas J."/>
            <person name="Jaeger S."/>
            <person name="Walker R."/>
            <person name="Wylie K."/>
            <person name="Sekhon M."/>
            <person name="Becker M.C."/>
            <person name="O'Laughlin M.D."/>
            <person name="Schaller M.E."/>
            <person name="Fewell G.A."/>
            <person name="Delehaunty K.D."/>
            <person name="Miner T.L."/>
            <person name="Nash W.E."/>
            <person name="Cordes M."/>
            <person name="Du H."/>
            <person name="Sun H."/>
            <person name="Edwards J."/>
            <person name="Bradshaw-Cordum H."/>
            <person name="Ali J."/>
            <person name="Andrews S."/>
            <person name="Isak A."/>
            <person name="Vanbrunt A."/>
            <person name="Nguyen C."/>
            <person name="Du F."/>
            <person name="Lamar B."/>
            <person name="Courtney L."/>
            <person name="Kalicki J."/>
            <person name="Ozersky P."/>
            <person name="Bielicki L."/>
            <person name="Scott K."/>
            <person name="Holmes A."/>
            <person name="Harkins R."/>
            <person name="Harris A."/>
            <person name="Strong C.M."/>
            <person name="Hou S."/>
            <person name="Tomlinson C."/>
            <person name="Dauphin-Kohlberg S."/>
            <person name="Kozlowicz-Reilly A."/>
            <person name="Leonard S."/>
            <person name="Rohlfing T."/>
            <person name="Rock S.M."/>
            <person name="Tin-Wollam A.-M."/>
            <person name="Abbott A."/>
            <person name="Minx P."/>
            <person name="Maupin R."/>
            <person name="Strowmatt C."/>
            <person name="Latreille P."/>
            <person name="Miller N."/>
            <person name="Johnson D."/>
            <person name="Murray J."/>
            <person name="Woessner J.P."/>
            <person name="Wendl M.C."/>
            <person name="Yang S.-P."/>
            <person name="Schultz B.R."/>
            <person name="Wallis J.W."/>
            <person name="Spieth J."/>
            <person name="Bieri T.A."/>
            <person name="Nelson J.O."/>
            <person name="Berkowicz N."/>
            <person name="Wohldmann P.E."/>
            <person name="Cook L.L."/>
            <person name="Hickenbotham M.T."/>
            <person name="Eldred J."/>
            <person name="Williams D."/>
            <person name="Bedell J.A."/>
            <person name="Mardis E.R."/>
            <person name="Clifton S.W."/>
            <person name="Chissoe S.L."/>
            <person name="Marra M.A."/>
            <person name="Raymond C."/>
            <person name="Haugen E."/>
            <person name="Gillett W."/>
            <person name="Zhou Y."/>
            <person name="James R."/>
            <person name="Phelps K."/>
            <person name="Iadanoto S."/>
            <person name="Bubb K."/>
            <person name="Simms E."/>
            <person name="Levy R."/>
            <person name="Clendenning J."/>
            <person name="Kaul R."/>
            <person name="Kent W.J."/>
            <person name="Furey T.S."/>
            <person name="Baertsch R.A."/>
            <person name="Brent M.R."/>
            <person name="Keibler E."/>
            <person name="Flicek P."/>
            <person name="Bork P."/>
            <person name="Suyama M."/>
            <person name="Bailey J.A."/>
            <person name="Portnoy M.E."/>
            <person name="Torrents D."/>
            <person name="Chinwalla A.T."/>
            <person name="Gish W.R."/>
            <person name="Eddy S.R."/>
            <person name="McPherson J.D."/>
            <person name="Olson M.V."/>
            <person name="Eichler E.E."/>
            <person name="Green E.D."/>
            <person name="Waterston R.H."/>
            <person name="Wilson R.K."/>
        </authorList>
    </citation>
    <scope>NUCLEOTIDE SEQUENCE [LARGE SCALE GENOMIC DNA]</scope>
</reference>
<reference key="3">
    <citation type="journal article" date="2004" name="Genome Res.">
        <title>The status, quality, and expansion of the NIH full-length cDNA project: the Mammalian Gene Collection (MGC).</title>
        <authorList>
            <consortium name="The MGC Project Team"/>
        </authorList>
    </citation>
    <scope>NUCLEOTIDE SEQUENCE [LARGE SCALE MRNA] OF 1-388</scope>
    <source>
        <tissue>Muscle</tissue>
    </source>
</reference>
<reference key="4">
    <citation type="journal article" date="2019" name="J. Clin. Med.">
        <title>ADCK2 Haploinsufficiency Reduces Mitochondrial Lipid Oxidation and Causes Myopathy Associated with CoQ Deficiency.</title>
        <authorList>
            <person name="Vazquez-Fonseca L."/>
            <person name="Schaefer J."/>
            <person name="Navas-Enamorado I."/>
            <person name="Santos-Ocana C."/>
            <person name="Hernandez-Camacho J.D."/>
            <person name="Guerra I."/>
            <person name="Cascajo M.V."/>
            <person name="Sanchez-Cuesta A."/>
            <person name="Horvath Z."/>
            <person name="Siendones E."/>
            <person name="Jou C."/>
            <person name="Casado M."/>
            <person name="Gutierrez P."/>
            <person name="Brea-Calvo G."/>
            <person name="Lopez-Lluch G."/>
            <person name="Fernandez-Ayala D.J.M."/>
            <person name="Cortes-Rodriguez A.B."/>
            <person name="Rodriguez-Aguilera J.C."/>
            <person name="Matte C."/>
            <person name="Ribes A."/>
            <person name="Prieto-Soler S.Y."/>
            <person name="Dominguez-Del-Toro E."/>
            <person name="Francesco A.D."/>
            <person name="Aon M.A."/>
            <person name="Bernier M."/>
            <person name="Salviati L."/>
            <person name="Artuch R."/>
            <person name="Cabo R."/>
            <person name="Jackson S."/>
            <person name="Navas P."/>
        </authorList>
    </citation>
    <scope>FUNCTION</scope>
    <scope>VARIANT 333-ARG--PRO-626 DEL</scope>
    <scope>CHARACTERIZATION OF VARIANT 333-ARG--PRO-626 DEL</scope>
</reference>
<reference key="5">
    <citation type="journal article" date="2021" name="Elife">
        <title>A subcellular map of the human kinome.</title>
        <authorList>
            <person name="Zhang H."/>
            <person name="Cao X."/>
            <person name="Tang M."/>
            <person name="Zhong G."/>
            <person name="Si Y."/>
            <person name="Li H."/>
            <person name="Zhu F."/>
            <person name="Liao Q."/>
            <person name="Li L."/>
            <person name="Zhao J."/>
            <person name="Feng J."/>
            <person name="Li S."/>
            <person name="Wang C."/>
            <person name="Kaulich M."/>
            <person name="Wang F."/>
            <person name="Chen L."/>
            <person name="Li L."/>
            <person name="Xia Z."/>
            <person name="Liang T."/>
            <person name="Lu H."/>
            <person name="Feng X.H."/>
            <person name="Zhao B."/>
        </authorList>
    </citation>
    <scope>SUBCELLULAR LOCATION</scope>
</reference>
<reference key="6">
    <citation type="journal article" date="2007" name="Nature">
        <title>Patterns of somatic mutation in human cancer genomes.</title>
        <authorList>
            <person name="Greenman C."/>
            <person name="Stephens P."/>
            <person name="Smith R."/>
            <person name="Dalgliesh G.L."/>
            <person name="Hunter C."/>
            <person name="Bignell G."/>
            <person name="Davies H."/>
            <person name="Teague J."/>
            <person name="Butler A."/>
            <person name="Stevens C."/>
            <person name="Edkins S."/>
            <person name="O'Meara S."/>
            <person name="Vastrik I."/>
            <person name="Schmidt E.E."/>
            <person name="Avis T."/>
            <person name="Barthorpe S."/>
            <person name="Bhamra G."/>
            <person name="Buck G."/>
            <person name="Choudhury B."/>
            <person name="Clements J."/>
            <person name="Cole J."/>
            <person name="Dicks E."/>
            <person name="Forbes S."/>
            <person name="Gray K."/>
            <person name="Halliday K."/>
            <person name="Harrison R."/>
            <person name="Hills K."/>
            <person name="Hinton J."/>
            <person name="Jenkinson A."/>
            <person name="Jones D."/>
            <person name="Menzies A."/>
            <person name="Mironenko T."/>
            <person name="Perry J."/>
            <person name="Raine K."/>
            <person name="Richardson D."/>
            <person name="Shepherd R."/>
            <person name="Small A."/>
            <person name="Tofts C."/>
            <person name="Varian J."/>
            <person name="Webb T."/>
            <person name="West S."/>
            <person name="Widaa S."/>
            <person name="Yates A."/>
            <person name="Cahill D.P."/>
            <person name="Louis D.N."/>
            <person name="Goldstraw P."/>
            <person name="Nicholson A.G."/>
            <person name="Brasseur F."/>
            <person name="Looijenga L."/>
            <person name="Weber B.L."/>
            <person name="Chiew Y.-E."/>
            <person name="DeFazio A."/>
            <person name="Greaves M.F."/>
            <person name="Green A.R."/>
            <person name="Campbell P."/>
            <person name="Birney E."/>
            <person name="Easton D.F."/>
            <person name="Chenevix-Trench G."/>
            <person name="Tan M.-H."/>
            <person name="Khoo S.K."/>
            <person name="Teh B.T."/>
            <person name="Yuen S.T."/>
            <person name="Leung S.Y."/>
            <person name="Wooster R."/>
            <person name="Futreal P.A."/>
            <person name="Stratton M.R."/>
        </authorList>
    </citation>
    <scope>VARIANTS [LARGE SCALE ANALYSIS] PRO-307; LEU-418; LEU-622 AND LEU-626</scope>
</reference>